<proteinExistence type="inferred from homology"/>
<name>DISA_CLOPS</name>
<organism>
    <name type="scientific">Clostridium perfringens (strain SM101 / Type A)</name>
    <dbReference type="NCBI Taxonomy" id="289380"/>
    <lineage>
        <taxon>Bacteria</taxon>
        <taxon>Bacillati</taxon>
        <taxon>Bacillota</taxon>
        <taxon>Clostridia</taxon>
        <taxon>Eubacteriales</taxon>
        <taxon>Clostridiaceae</taxon>
        <taxon>Clostridium</taxon>
    </lineage>
</organism>
<evidence type="ECO:0000255" key="1">
    <source>
        <dbReference type="HAMAP-Rule" id="MF_01438"/>
    </source>
</evidence>
<evidence type="ECO:0000255" key="2">
    <source>
        <dbReference type="PROSITE-ProRule" id="PRU01130"/>
    </source>
</evidence>
<gene>
    <name evidence="1" type="primary">disA</name>
    <name type="ordered locus">CPR_2429</name>
</gene>
<feature type="chain" id="PRO_1000017368" description="DNA integrity scanning protein DisA">
    <location>
        <begin position="1"/>
        <end position="354"/>
    </location>
</feature>
<feature type="domain" description="DAC" evidence="2">
    <location>
        <begin position="6"/>
        <end position="144"/>
    </location>
</feature>
<feature type="binding site" evidence="1">
    <location>
        <position position="73"/>
    </location>
    <ligand>
        <name>ATP</name>
        <dbReference type="ChEBI" id="CHEBI:30616"/>
    </ligand>
</feature>
<feature type="binding site" evidence="1">
    <location>
        <position position="91"/>
    </location>
    <ligand>
        <name>ATP</name>
        <dbReference type="ChEBI" id="CHEBI:30616"/>
    </ligand>
</feature>
<feature type="binding site" evidence="1">
    <location>
        <begin position="104"/>
        <end position="108"/>
    </location>
    <ligand>
        <name>ATP</name>
        <dbReference type="ChEBI" id="CHEBI:30616"/>
    </ligand>
</feature>
<accession>Q0SQB6</accession>
<dbReference type="EC" id="2.7.7.85" evidence="1"/>
<dbReference type="EMBL" id="CP000312">
    <property type="protein sequence ID" value="ABG86516.1"/>
    <property type="molecule type" value="Genomic_DNA"/>
</dbReference>
<dbReference type="RefSeq" id="WP_011593150.1">
    <property type="nucleotide sequence ID" value="NC_008262.1"/>
</dbReference>
<dbReference type="SMR" id="Q0SQB6"/>
<dbReference type="KEGG" id="cpr:CPR_2429"/>
<dbReference type="Proteomes" id="UP000001824">
    <property type="component" value="Chromosome"/>
</dbReference>
<dbReference type="GO" id="GO:0004016">
    <property type="term" value="F:adenylate cyclase activity"/>
    <property type="evidence" value="ECO:0007669"/>
    <property type="project" value="TreeGrafter"/>
</dbReference>
<dbReference type="GO" id="GO:0005524">
    <property type="term" value="F:ATP binding"/>
    <property type="evidence" value="ECO:0007669"/>
    <property type="project" value="UniProtKB-UniRule"/>
</dbReference>
<dbReference type="GO" id="GO:0106408">
    <property type="term" value="F:diadenylate cyclase activity"/>
    <property type="evidence" value="ECO:0007669"/>
    <property type="project" value="UniProtKB-EC"/>
</dbReference>
<dbReference type="GO" id="GO:0003677">
    <property type="term" value="F:DNA binding"/>
    <property type="evidence" value="ECO:0007669"/>
    <property type="project" value="UniProtKB-UniRule"/>
</dbReference>
<dbReference type="GO" id="GO:0006281">
    <property type="term" value="P:DNA repair"/>
    <property type="evidence" value="ECO:0007669"/>
    <property type="project" value="UniProtKB-UniRule"/>
</dbReference>
<dbReference type="FunFam" id="3.40.1700.10:FF:000001">
    <property type="entry name" value="DNA integrity scanning protein DisA"/>
    <property type="match status" value="1"/>
</dbReference>
<dbReference type="Gene3D" id="1.10.150.20">
    <property type="entry name" value="5' to 3' exonuclease, C-terminal subdomain"/>
    <property type="match status" value="1"/>
</dbReference>
<dbReference type="Gene3D" id="1.20.1260.110">
    <property type="entry name" value="DNA integrity scanning linker region"/>
    <property type="match status" value="1"/>
</dbReference>
<dbReference type="Gene3D" id="3.40.1700.10">
    <property type="entry name" value="DNA integrity scanning protein, DisA, N-terminal domain"/>
    <property type="match status" value="1"/>
</dbReference>
<dbReference type="HAMAP" id="MF_01438">
    <property type="entry name" value="DisA"/>
    <property type="match status" value="1"/>
</dbReference>
<dbReference type="InterPro" id="IPR050338">
    <property type="entry name" value="DisA"/>
</dbReference>
<dbReference type="InterPro" id="IPR038331">
    <property type="entry name" value="DisA_sf"/>
</dbReference>
<dbReference type="InterPro" id="IPR036888">
    <property type="entry name" value="DNA_integrity_DisA_N_sf"/>
</dbReference>
<dbReference type="InterPro" id="IPR018906">
    <property type="entry name" value="DNA_integrity_scan_DisA_link"/>
</dbReference>
<dbReference type="InterPro" id="IPR003390">
    <property type="entry name" value="DNA_integrity_scan_DisA_N"/>
</dbReference>
<dbReference type="InterPro" id="IPR023763">
    <property type="entry name" value="DNA_integrity_scanning_protein"/>
</dbReference>
<dbReference type="InterPro" id="IPR010994">
    <property type="entry name" value="RuvA_2-like"/>
</dbReference>
<dbReference type="NCBIfam" id="NF010009">
    <property type="entry name" value="PRK13482.1"/>
    <property type="match status" value="1"/>
</dbReference>
<dbReference type="PANTHER" id="PTHR34185">
    <property type="entry name" value="DIADENYLATE CYCLASE"/>
    <property type="match status" value="1"/>
</dbReference>
<dbReference type="PANTHER" id="PTHR34185:SF3">
    <property type="entry name" value="DNA INTEGRITY SCANNING PROTEIN DISA"/>
    <property type="match status" value="1"/>
</dbReference>
<dbReference type="Pfam" id="PF02457">
    <property type="entry name" value="DAC"/>
    <property type="match status" value="1"/>
</dbReference>
<dbReference type="Pfam" id="PF10635">
    <property type="entry name" value="DisA-linker"/>
    <property type="match status" value="1"/>
</dbReference>
<dbReference type="SUPFAM" id="SSF47781">
    <property type="entry name" value="RuvA domain 2-like"/>
    <property type="match status" value="1"/>
</dbReference>
<dbReference type="SUPFAM" id="SSF143597">
    <property type="entry name" value="YojJ-like"/>
    <property type="match status" value="1"/>
</dbReference>
<dbReference type="PROSITE" id="PS51794">
    <property type="entry name" value="DAC"/>
    <property type="match status" value="1"/>
</dbReference>
<reference key="1">
    <citation type="journal article" date="2006" name="Genome Res.">
        <title>Skewed genomic variability in strains of the toxigenic bacterial pathogen, Clostridium perfringens.</title>
        <authorList>
            <person name="Myers G.S.A."/>
            <person name="Rasko D.A."/>
            <person name="Cheung J.K."/>
            <person name="Ravel J."/>
            <person name="Seshadri R."/>
            <person name="DeBoy R.T."/>
            <person name="Ren Q."/>
            <person name="Varga J."/>
            <person name="Awad M.M."/>
            <person name="Brinkac L.M."/>
            <person name="Daugherty S.C."/>
            <person name="Haft D.H."/>
            <person name="Dodson R.J."/>
            <person name="Madupu R."/>
            <person name="Nelson W.C."/>
            <person name="Rosovitz M.J."/>
            <person name="Sullivan S.A."/>
            <person name="Khouri H."/>
            <person name="Dimitrov G.I."/>
            <person name="Watkins K.L."/>
            <person name="Mulligan S."/>
            <person name="Benton J."/>
            <person name="Radune D."/>
            <person name="Fisher D.J."/>
            <person name="Atkins H.S."/>
            <person name="Hiscox T."/>
            <person name="Jost B.H."/>
            <person name="Billington S.J."/>
            <person name="Songer J.G."/>
            <person name="McClane B.A."/>
            <person name="Titball R.W."/>
            <person name="Rood J.I."/>
            <person name="Melville S.B."/>
            <person name="Paulsen I.T."/>
        </authorList>
    </citation>
    <scope>NUCLEOTIDE SEQUENCE [LARGE SCALE GENOMIC DNA]</scope>
    <source>
        <strain>SM101 / Type A</strain>
    </source>
</reference>
<protein>
    <recommendedName>
        <fullName evidence="1">DNA integrity scanning protein DisA</fullName>
    </recommendedName>
    <alternativeName>
        <fullName evidence="1">Cyclic di-AMP synthase</fullName>
        <shortName evidence="1">c-di-AMP synthase</shortName>
    </alternativeName>
    <alternativeName>
        <fullName evidence="1">Diadenylate cyclase</fullName>
        <ecNumber evidence="1">2.7.7.85</ecNumber>
    </alternativeName>
</protein>
<sequence>MRTVHDDELKKILKIMSPGTSLREGLDNILRAKTGGLIVLGDNEEILDLVDGGFNINSEYSPAYIYELAKMDGALVLTSDRKRILYANAQLMPNQSISTFETGTRHRTAQRVAKQTNKIAIAISQRRNIITVYKGDIKYVLRDSAVILSKANQAIQTLEKYVAVLERVTNNLNILEFQDLATLFDVTTAIQRTEMVMRIVEEIEGYIIELGNEGRLISMQLNELVRSIEQDGVLLIRDYCYDKMEYNDVYKEIQELSAEDLLDLDIIAKELGYVGKSLIDTLVSPRGYRISSKIPRIPSNVIENLVGHFGKLKYILEAGNEELDQVEGIGEARARAIKNGLRRIREQVALNKNL</sequence>
<comment type="function">
    <text evidence="1">Participates in a DNA-damage check-point that is active prior to asymmetric division when DNA is damaged. DisA forms globular foci that rapidly scan along the chromosomes during sporulation, searching for lesions. When a lesion is present, DisA pauses at the lesion site. This triggers a cellular response that culminates in a temporary block in sporulation initiation.</text>
</comment>
<comment type="function">
    <text evidence="1">Also has diadenylate cyclase activity, catalyzing the condensation of 2 ATP molecules into cyclic di-AMP (c-di-AMP). c-di-AMP acts as a signaling molecule that couples DNA integrity with progression of sporulation. The rise in c-di-AMP level generated by DisA while scanning the chromosome, operates as a positive signal that advances sporulation; upon encountering a lesion, the DisA focus arrests at the damaged site and halts c-di-AMP synthesis.</text>
</comment>
<comment type="catalytic activity">
    <reaction evidence="1">
        <text>2 ATP = 3',3'-c-di-AMP + 2 diphosphate</text>
        <dbReference type="Rhea" id="RHEA:35655"/>
        <dbReference type="ChEBI" id="CHEBI:30616"/>
        <dbReference type="ChEBI" id="CHEBI:33019"/>
        <dbReference type="ChEBI" id="CHEBI:71500"/>
        <dbReference type="EC" id="2.7.7.85"/>
    </reaction>
</comment>
<comment type="cofactor">
    <cofactor evidence="1">
        <name>Mg(2+)</name>
        <dbReference type="ChEBI" id="CHEBI:18420"/>
    </cofactor>
</comment>
<comment type="subunit">
    <text evidence="1">Homooctamer.</text>
</comment>
<comment type="similarity">
    <text evidence="1">Belongs to the DisA family.</text>
</comment>
<keyword id="KW-0067">ATP-binding</keyword>
<keyword id="KW-0227">DNA damage</keyword>
<keyword id="KW-0234">DNA repair</keyword>
<keyword id="KW-0238">DNA-binding</keyword>
<keyword id="KW-0460">Magnesium</keyword>
<keyword id="KW-0547">Nucleotide-binding</keyword>
<keyword id="KW-0548">Nucleotidyltransferase</keyword>
<keyword id="KW-0808">Transferase</keyword>